<name>O16A_CONCL</name>
<proteinExistence type="inferred from homology"/>
<feature type="signal peptide" evidence="2">
    <location>
        <begin position="1"/>
        <end position="24"/>
    </location>
</feature>
<feature type="propeptide" id="PRO_0000414991" evidence="1">
    <location>
        <begin position="25"/>
        <end position="37"/>
    </location>
</feature>
<feature type="peptide" id="PRO_0000414992" description="Conotoxin Cl6.10">
    <location>
        <begin position="40"/>
        <end position="67"/>
    </location>
</feature>
<feature type="disulfide bond" evidence="1">
    <location>
        <begin position="43"/>
        <end position="57"/>
    </location>
</feature>
<feature type="disulfide bond" evidence="1">
    <location>
        <begin position="50"/>
        <end position="61"/>
    </location>
</feature>
<feature type="disulfide bond" evidence="1">
    <location>
        <begin position="56"/>
        <end position="65"/>
    </location>
</feature>
<keyword id="KW-1015">Disulfide bond</keyword>
<keyword id="KW-0960">Knottin</keyword>
<keyword id="KW-0528">Neurotoxin</keyword>
<keyword id="KW-0964">Secreted</keyword>
<keyword id="KW-0732">Signal</keyword>
<keyword id="KW-0800">Toxin</keyword>
<sequence length="67" mass="7506">MKLTCVLIAAVLLLAVCQLDSADATAYMRKDPSLRSPKRTRGCKTKGTWCWASRECCLKDCLFVCVY</sequence>
<dbReference type="EMBL" id="FJ959142">
    <property type="protein sequence ID" value="ADB93112.1"/>
    <property type="molecule type" value="Genomic_DNA"/>
</dbReference>
<dbReference type="ConoServer" id="4027">
    <property type="toxin name" value="Cal6.10 precursor"/>
</dbReference>
<dbReference type="GO" id="GO:0005576">
    <property type="term" value="C:extracellular region"/>
    <property type="evidence" value="ECO:0007669"/>
    <property type="project" value="UniProtKB-SubCell"/>
</dbReference>
<dbReference type="GO" id="GO:0008200">
    <property type="term" value="F:ion channel inhibitor activity"/>
    <property type="evidence" value="ECO:0007669"/>
    <property type="project" value="InterPro"/>
</dbReference>
<dbReference type="GO" id="GO:0090729">
    <property type="term" value="F:toxin activity"/>
    <property type="evidence" value="ECO:0007669"/>
    <property type="project" value="UniProtKB-KW"/>
</dbReference>
<dbReference type="InterPro" id="IPR004214">
    <property type="entry name" value="Conotoxin"/>
</dbReference>
<dbReference type="Pfam" id="PF02950">
    <property type="entry name" value="Conotoxin"/>
    <property type="match status" value="1"/>
</dbReference>
<evidence type="ECO:0000250" key="1"/>
<evidence type="ECO:0000255" key="2"/>
<evidence type="ECO:0000305" key="3"/>
<organism>
    <name type="scientific">Californiconus californicus</name>
    <name type="common">California cone</name>
    <name type="synonym">Conus californicus</name>
    <dbReference type="NCBI Taxonomy" id="1736779"/>
    <lineage>
        <taxon>Eukaryota</taxon>
        <taxon>Metazoa</taxon>
        <taxon>Spiralia</taxon>
        <taxon>Lophotrochozoa</taxon>
        <taxon>Mollusca</taxon>
        <taxon>Gastropoda</taxon>
        <taxon>Caenogastropoda</taxon>
        <taxon>Neogastropoda</taxon>
        <taxon>Conoidea</taxon>
        <taxon>Conidae</taxon>
        <taxon>Californiconus</taxon>
    </lineage>
</organism>
<accession>D6C4K0</accession>
<protein>
    <recommendedName>
        <fullName>Conotoxin Cl6.10</fullName>
    </recommendedName>
</protein>
<comment type="subcellular location">
    <subcellularLocation>
        <location evidence="1">Secreted</location>
    </subcellularLocation>
</comment>
<comment type="tissue specificity">
    <text>Expressed by the venom duct.</text>
</comment>
<comment type="domain">
    <text evidence="1">The presence of a 'disulfide through disulfide knot' structurally defines this protein as a knottin.</text>
</comment>
<comment type="domain">
    <text>The cysteine framework is VI/VII (C-C-CC-C-C).</text>
</comment>
<comment type="similarity">
    <text evidence="3">Belongs to the conotoxin O1 superfamily.</text>
</comment>
<reference key="1">
    <citation type="journal article" date="2010" name="Mol. Phylogenet. Evol.">
        <title>Evolution of Conus peptide toxins: analysis of Conus californicus Reeve, 1844.</title>
        <authorList>
            <person name="Biggs J.S."/>
            <person name="Watkins M."/>
            <person name="Puillandre N."/>
            <person name="Ownby J.P."/>
            <person name="Lopez-Vera E."/>
            <person name="Christensen S."/>
            <person name="Moreno K.J."/>
            <person name="Bernaldez J."/>
            <person name="Licea-Navarro A."/>
            <person name="Corneli P.S."/>
            <person name="Olivera B.M."/>
        </authorList>
    </citation>
    <scope>NUCLEOTIDE SEQUENCE [GENOMIC DNA]</scope>
</reference>